<dbReference type="EMBL" id="CU329670">
    <property type="protein sequence ID" value="CAC19769.2"/>
    <property type="molecule type" value="Genomic_DNA"/>
</dbReference>
<dbReference type="EMBL" id="D89130">
    <property type="protein sequence ID" value="BAA13792.1"/>
    <property type="molecule type" value="mRNA"/>
</dbReference>
<dbReference type="PIR" id="T42374">
    <property type="entry name" value="T42374"/>
</dbReference>
<dbReference type="RefSeq" id="NP_594060.2">
    <property type="nucleotide sequence ID" value="NM_001019484.2"/>
</dbReference>
<dbReference type="SMR" id="Q9HDZ2"/>
<dbReference type="BioGRID" id="278628">
    <property type="interactions" value="8"/>
</dbReference>
<dbReference type="FunCoup" id="Q9HDZ2">
    <property type="interactions" value="187"/>
</dbReference>
<dbReference type="STRING" id="284812.Q9HDZ2"/>
<dbReference type="TCDB" id="9.B.131.1.9">
    <property type="family name" value="the post-gpi attachment protein (p-gap2) family"/>
</dbReference>
<dbReference type="iPTMnet" id="Q9HDZ2"/>
<dbReference type="PaxDb" id="4896-SPAC589.12.1"/>
<dbReference type="EnsemblFungi" id="SPAC589.12.1">
    <property type="protein sequence ID" value="SPAC589.12.1:pep"/>
    <property type="gene ID" value="SPAC589.12"/>
</dbReference>
<dbReference type="GeneID" id="2542152"/>
<dbReference type="KEGG" id="spo:2542152"/>
<dbReference type="PomBase" id="SPAC589.12">
    <property type="gene designation" value="cwh43"/>
</dbReference>
<dbReference type="VEuPathDB" id="FungiDB:SPAC589.12"/>
<dbReference type="eggNOG" id="KOG3979">
    <property type="taxonomic scope" value="Eukaryota"/>
</dbReference>
<dbReference type="HOGENOM" id="CLU_009808_0_0_1"/>
<dbReference type="InParanoid" id="Q9HDZ2"/>
<dbReference type="OMA" id="CVWYFPL"/>
<dbReference type="PhylomeDB" id="Q9HDZ2"/>
<dbReference type="PRO" id="PR:Q9HDZ2"/>
<dbReference type="Proteomes" id="UP000002485">
    <property type="component" value="Chromosome I"/>
</dbReference>
<dbReference type="GO" id="GO:0005783">
    <property type="term" value="C:endoplasmic reticulum"/>
    <property type="evidence" value="ECO:0000314"/>
    <property type="project" value="PomBase"/>
</dbReference>
<dbReference type="GO" id="GO:0005635">
    <property type="term" value="C:nuclear envelope"/>
    <property type="evidence" value="ECO:0000314"/>
    <property type="project" value="PomBase"/>
</dbReference>
<dbReference type="GO" id="GO:1990578">
    <property type="term" value="C:perinuclear endoplasmic reticulum membrane"/>
    <property type="evidence" value="ECO:0000315"/>
    <property type="project" value="PomBase"/>
</dbReference>
<dbReference type="GO" id="GO:0005886">
    <property type="term" value="C:plasma membrane"/>
    <property type="evidence" value="ECO:0000314"/>
    <property type="project" value="PomBase"/>
</dbReference>
<dbReference type="GO" id="GO:0031505">
    <property type="term" value="P:fungal-type cell wall organization"/>
    <property type="evidence" value="ECO:0000318"/>
    <property type="project" value="GO_Central"/>
</dbReference>
<dbReference type="GO" id="GO:0006506">
    <property type="term" value="P:GPI anchor biosynthetic process"/>
    <property type="evidence" value="ECO:0000318"/>
    <property type="project" value="GO_Central"/>
</dbReference>
<dbReference type="FunFam" id="3.60.10.10:FF:000100">
    <property type="entry name" value="Unplaced genomic scaffold supercont2.12, whole genome shotgun sequence"/>
    <property type="match status" value="1"/>
</dbReference>
<dbReference type="Gene3D" id="3.60.10.10">
    <property type="entry name" value="Endonuclease/exonuclease/phosphatase"/>
    <property type="match status" value="1"/>
</dbReference>
<dbReference type="InterPro" id="IPR036691">
    <property type="entry name" value="Endo/exonu/phosph_ase_sf"/>
</dbReference>
<dbReference type="InterPro" id="IPR019402">
    <property type="entry name" value="Frag1/DRAM/Sfk1"/>
</dbReference>
<dbReference type="InterPro" id="IPR051916">
    <property type="entry name" value="GPI-anchor_lipid_remodeler"/>
</dbReference>
<dbReference type="InterPro" id="IPR053912">
    <property type="entry name" value="PGAP2IP_TM_1nd"/>
</dbReference>
<dbReference type="InterPro" id="IPR053911">
    <property type="entry name" value="PGAP2IP_TM_2nd"/>
</dbReference>
<dbReference type="PANTHER" id="PTHR14859">
    <property type="entry name" value="CALCOFLUOR WHITE HYPERSENSITIVE PROTEIN PRECURSOR"/>
    <property type="match status" value="1"/>
</dbReference>
<dbReference type="PANTHER" id="PTHR14859:SF1">
    <property type="entry name" value="PGAP2-INTERACTING PROTEIN"/>
    <property type="match status" value="1"/>
</dbReference>
<dbReference type="Pfam" id="PF23022">
    <property type="entry name" value="6TM_1st_PGAP2IP"/>
    <property type="match status" value="1"/>
</dbReference>
<dbReference type="Pfam" id="PF23021">
    <property type="entry name" value="6TM_2nd_PGAP2IP"/>
    <property type="match status" value="1"/>
</dbReference>
<dbReference type="Pfam" id="PF23226">
    <property type="entry name" value="Exo_endo_phos_PGAP2IP"/>
    <property type="match status" value="1"/>
</dbReference>
<dbReference type="Pfam" id="PF10277">
    <property type="entry name" value="Frag1"/>
    <property type="match status" value="1"/>
</dbReference>
<dbReference type="SUPFAM" id="SSF56219">
    <property type="entry name" value="DNase I-like"/>
    <property type="match status" value="1"/>
</dbReference>
<reference key="1">
    <citation type="journal article" date="2002" name="Nature">
        <title>The genome sequence of Schizosaccharomyces pombe.</title>
        <authorList>
            <person name="Wood V."/>
            <person name="Gwilliam R."/>
            <person name="Rajandream M.A."/>
            <person name="Lyne M.H."/>
            <person name="Lyne R."/>
            <person name="Stewart A."/>
            <person name="Sgouros J.G."/>
            <person name="Peat N."/>
            <person name="Hayles J."/>
            <person name="Baker S.G."/>
            <person name="Basham D."/>
            <person name="Bowman S."/>
            <person name="Brooks K."/>
            <person name="Brown D."/>
            <person name="Brown S."/>
            <person name="Chillingworth T."/>
            <person name="Churcher C.M."/>
            <person name="Collins M."/>
            <person name="Connor R."/>
            <person name="Cronin A."/>
            <person name="Davis P."/>
            <person name="Feltwell T."/>
            <person name="Fraser A."/>
            <person name="Gentles S."/>
            <person name="Goble A."/>
            <person name="Hamlin N."/>
            <person name="Harris D.E."/>
            <person name="Hidalgo J."/>
            <person name="Hodgson G."/>
            <person name="Holroyd S."/>
            <person name="Hornsby T."/>
            <person name="Howarth S."/>
            <person name="Huckle E.J."/>
            <person name="Hunt S."/>
            <person name="Jagels K."/>
            <person name="James K.D."/>
            <person name="Jones L."/>
            <person name="Jones M."/>
            <person name="Leather S."/>
            <person name="McDonald S."/>
            <person name="McLean J."/>
            <person name="Mooney P."/>
            <person name="Moule S."/>
            <person name="Mungall K.L."/>
            <person name="Murphy L.D."/>
            <person name="Niblett D."/>
            <person name="Odell C."/>
            <person name="Oliver K."/>
            <person name="O'Neil S."/>
            <person name="Pearson D."/>
            <person name="Quail M.A."/>
            <person name="Rabbinowitsch E."/>
            <person name="Rutherford K.M."/>
            <person name="Rutter S."/>
            <person name="Saunders D."/>
            <person name="Seeger K."/>
            <person name="Sharp S."/>
            <person name="Skelton J."/>
            <person name="Simmonds M.N."/>
            <person name="Squares R."/>
            <person name="Squares S."/>
            <person name="Stevens K."/>
            <person name="Taylor K."/>
            <person name="Taylor R.G."/>
            <person name="Tivey A."/>
            <person name="Walsh S.V."/>
            <person name="Warren T."/>
            <person name="Whitehead S."/>
            <person name="Woodward J.R."/>
            <person name="Volckaert G."/>
            <person name="Aert R."/>
            <person name="Robben J."/>
            <person name="Grymonprez B."/>
            <person name="Weltjens I."/>
            <person name="Vanstreels E."/>
            <person name="Rieger M."/>
            <person name="Schaefer M."/>
            <person name="Mueller-Auer S."/>
            <person name="Gabel C."/>
            <person name="Fuchs M."/>
            <person name="Duesterhoeft A."/>
            <person name="Fritzc C."/>
            <person name="Holzer E."/>
            <person name="Moestl D."/>
            <person name="Hilbert H."/>
            <person name="Borzym K."/>
            <person name="Langer I."/>
            <person name="Beck A."/>
            <person name="Lehrach H."/>
            <person name="Reinhardt R."/>
            <person name="Pohl T.M."/>
            <person name="Eger P."/>
            <person name="Zimmermann W."/>
            <person name="Wedler H."/>
            <person name="Wambutt R."/>
            <person name="Purnelle B."/>
            <person name="Goffeau A."/>
            <person name="Cadieu E."/>
            <person name="Dreano S."/>
            <person name="Gloux S."/>
            <person name="Lelaure V."/>
            <person name="Mottier S."/>
            <person name="Galibert F."/>
            <person name="Aves S.J."/>
            <person name="Xiang Z."/>
            <person name="Hunt C."/>
            <person name="Moore K."/>
            <person name="Hurst S.M."/>
            <person name="Lucas M."/>
            <person name="Rochet M."/>
            <person name="Gaillardin C."/>
            <person name="Tallada V.A."/>
            <person name="Garzon A."/>
            <person name="Thode G."/>
            <person name="Daga R.R."/>
            <person name="Cruzado L."/>
            <person name="Jimenez J."/>
            <person name="Sanchez M."/>
            <person name="del Rey F."/>
            <person name="Benito J."/>
            <person name="Dominguez A."/>
            <person name="Revuelta J.L."/>
            <person name="Moreno S."/>
            <person name="Armstrong J."/>
            <person name="Forsburg S.L."/>
            <person name="Cerutti L."/>
            <person name="Lowe T."/>
            <person name="McCombie W.R."/>
            <person name="Paulsen I."/>
            <person name="Potashkin J."/>
            <person name="Shpakovski G.V."/>
            <person name="Ussery D."/>
            <person name="Barrell B.G."/>
            <person name="Nurse P."/>
        </authorList>
    </citation>
    <scope>NUCLEOTIDE SEQUENCE [LARGE SCALE GENOMIC DNA]</scope>
    <source>
        <strain>972 / ATCC 24843</strain>
    </source>
</reference>
<reference key="2">
    <citation type="journal article" date="1997" name="DNA Res.">
        <title>Identification of open reading frames in Schizosaccharomyces pombe cDNAs.</title>
        <authorList>
            <person name="Yoshioka S."/>
            <person name="Kato K."/>
            <person name="Nakai K."/>
            <person name="Okayama H."/>
            <person name="Nojima H."/>
        </authorList>
    </citation>
    <scope>NUCLEOTIDE SEQUENCE [LARGE SCALE MRNA] OF 571-971</scope>
    <source>
        <strain>PR745</strain>
    </source>
</reference>
<name>CWH43_SCHPO</name>
<keyword id="KW-1003">Cell membrane</keyword>
<keyword id="KW-0256">Endoplasmic reticulum</keyword>
<keyword id="KW-0337">GPI-anchor biosynthesis</keyword>
<keyword id="KW-0472">Membrane</keyword>
<keyword id="KW-1185">Reference proteome</keyword>
<keyword id="KW-0812">Transmembrane</keyword>
<keyword id="KW-1133">Transmembrane helix</keyword>
<organism>
    <name type="scientific">Schizosaccharomyces pombe (strain 972 / ATCC 24843)</name>
    <name type="common">Fission yeast</name>
    <dbReference type="NCBI Taxonomy" id="284812"/>
    <lineage>
        <taxon>Eukaryota</taxon>
        <taxon>Fungi</taxon>
        <taxon>Dikarya</taxon>
        <taxon>Ascomycota</taxon>
        <taxon>Taphrinomycotina</taxon>
        <taxon>Schizosaccharomycetes</taxon>
        <taxon>Schizosaccharomycetales</taxon>
        <taxon>Schizosaccharomycetaceae</taxon>
        <taxon>Schizosaccharomyces</taxon>
    </lineage>
</organism>
<evidence type="ECO:0000250" key="1"/>
<evidence type="ECO:0000255" key="2"/>
<evidence type="ECO:0000305" key="3"/>
<accession>Q9HDZ2</accession>
<accession>P78781</accession>
<accession>Q9P6M4</accession>
<protein>
    <recommendedName>
        <fullName>Protein cwh43</fullName>
    </recommendedName>
</protein>
<gene>
    <name type="primary">cwh43</name>
    <name type="ORF">SPAC589.12</name>
    <name type="ORF">SPAC688.01</name>
</gene>
<sequence>MTEKTSSLVFSAQYVALVHTICSFAAFFIPLALALYTHYYQVVKNEFYGYPEEWFPSVSATIGDWYPERSVFQWLIALTATPRLLVLLLWFTLSGISRPSVIITTALGVLRTALCGGWVYVTSTDDHDWHDIFMIGYLISNAPWFILVSKCSPVNSMASRIRNIGSALFVLTIFPLIYWYIQHKFKHIPGAYTVYAFFEWSLILWDILFDSALYWDFKPLVFNLHTSKTYSNPSSFATRKKEKGEHLSYAEAAAVGTQAKNIKKDSNVKCSKKQILFSLLYFSSEVYLSFVFWSVLTSLGLLVWYFPLWHMGISGYEACILFELSPFLLGIPLLRKFASKVPVIFLFLNVIGIAAYKLEDPVHRLFVTAFSVCCECLAWTSLFSNISPENLAIERKISTFLFGLLASSIAKYSFFSNNPIWPILNETNGGKQIPALIVGIIACLIFAIFHVQQTTANAVEHFKLRKITALSAALSLGTVLFCLHTFLCDSTVLMTWSWDGYPIKGPQPYPHGAVSIVVSICAVLVAPYLYQSGAFMLIGFVLACFGSYFMYINHGWCSYLGGLIFTSYVLIYSFASIRISSFYSPAKVWGGAFLVYILYSLAHVWVVAYEFVPGGPILRERTSYILIFIGWNLAALVPAYSGESKEPNKADSSVVDIKQSDSSYRRRSFKKSLLTGFCLALMALKFAIQNMPPYDYTPYHPNEKLFTAGIWTIHFGLDNFMYASENRIRDAVRDMELDVFGLLESDTQRLIMGFRDLTQVLAHDLGMYADYGPGPDKHTWGAALLSKFPIVNSTHHLLPSPQGELAPAIHATLDVYGELIDVVVSHNGQYESQLDRRLQSTELARIMRESPRPLVFLGYVVSNVGQEPQTILTRDTGMLDIEPADYDRWCQYIFYRGVKRIGYARLHRSTITDTELQTGKFLVTKDLGRNVRIDKEHVPESHRYPSLFEGTGVNGHYYDNNLVVHEPWYYD</sequence>
<comment type="function">
    <text evidence="1">Involved in the maintenance of cell wall integrity. Required for the replacement of the diacylglycerol moiety by ceramides during GPI-anchor maturation (By similarity).</text>
</comment>
<comment type="subcellular location">
    <subcellularLocation>
        <location>Cell membrane</location>
        <topology>Multi-pass membrane protein</topology>
    </subcellularLocation>
    <subcellularLocation>
        <location evidence="1">Endoplasmic reticulum membrane</location>
        <topology evidence="1">Multi-pass membrane protein</topology>
    </subcellularLocation>
</comment>
<comment type="similarity">
    <text evidence="3">In the N-terminal section; belongs to the PGAP2 family.</text>
</comment>
<comment type="similarity">
    <text evidence="3">In the C-terminal section; belongs to the PGAP2IP family.</text>
</comment>
<proteinExistence type="evidence at transcript level"/>
<feature type="chain" id="PRO_0000116831" description="Protein cwh43">
    <location>
        <begin position="1"/>
        <end position="971"/>
    </location>
</feature>
<feature type="transmembrane region" description="Helical" evidence="2">
    <location>
        <begin position="15"/>
        <end position="35"/>
    </location>
</feature>
<feature type="transmembrane region" description="Helical" evidence="2">
    <location>
        <begin position="71"/>
        <end position="91"/>
    </location>
</feature>
<feature type="transmembrane region" description="Helical" evidence="2">
    <location>
        <begin position="101"/>
        <end position="121"/>
    </location>
</feature>
<feature type="transmembrane region" description="Helical" evidence="2">
    <location>
        <begin position="129"/>
        <end position="149"/>
    </location>
</feature>
<feature type="transmembrane region" description="Helical" evidence="2">
    <location>
        <begin position="161"/>
        <end position="181"/>
    </location>
</feature>
<feature type="transmembrane region" description="Helical" evidence="2">
    <location>
        <begin position="188"/>
        <end position="208"/>
    </location>
</feature>
<feature type="transmembrane region" description="Helical" evidence="2">
    <location>
        <begin position="286"/>
        <end position="306"/>
    </location>
</feature>
<feature type="transmembrane region" description="Helical" evidence="2">
    <location>
        <begin position="313"/>
        <end position="333"/>
    </location>
</feature>
<feature type="transmembrane region" description="Helical" evidence="2">
    <location>
        <begin position="336"/>
        <end position="356"/>
    </location>
</feature>
<feature type="transmembrane region" description="Helical" evidence="2">
    <location>
        <begin position="366"/>
        <end position="386"/>
    </location>
</feature>
<feature type="transmembrane region" description="Helical" evidence="2">
    <location>
        <begin position="397"/>
        <end position="417"/>
    </location>
</feature>
<feature type="transmembrane region" description="Helical" evidence="2">
    <location>
        <begin position="432"/>
        <end position="452"/>
    </location>
</feature>
<feature type="transmembrane region" description="Helical" evidence="2">
    <location>
        <begin position="467"/>
        <end position="487"/>
    </location>
</feature>
<feature type="transmembrane region" description="Helical" evidence="2">
    <location>
        <begin position="509"/>
        <end position="529"/>
    </location>
</feature>
<feature type="transmembrane region" description="Helical" evidence="2">
    <location>
        <begin position="532"/>
        <end position="552"/>
    </location>
</feature>
<feature type="transmembrane region" description="Helical" evidence="2">
    <location>
        <begin position="555"/>
        <end position="575"/>
    </location>
</feature>
<feature type="transmembrane region" description="Helical" evidence="2">
    <location>
        <begin position="588"/>
        <end position="608"/>
    </location>
</feature>
<feature type="transmembrane region" description="Helical" evidence="2">
    <location>
        <begin position="622"/>
        <end position="642"/>
    </location>
</feature>
<feature type="transmembrane region" description="Helical" evidence="2">
    <location>
        <begin position="673"/>
        <end position="693"/>
    </location>
</feature>
<feature type="region of interest" description="PGAP2-like" evidence="1">
    <location>
        <begin position="1"/>
        <end position="242"/>
    </location>
</feature>
<feature type="region of interest" description="PGAP2IP-like" evidence="1">
    <location>
        <begin position="243"/>
        <end position="971"/>
    </location>
</feature>
<feature type="active site" evidence="1">
    <location>
        <position position="826"/>
    </location>
</feature>